<accession>O60158</accession>
<accession>Q9USF5</accession>
<name>BQT4_SCHPO</name>
<feature type="chain" id="PRO_0000317335" description="Bouquet formation protein 4">
    <location>
        <begin position="1"/>
        <end position="432"/>
    </location>
</feature>
<feature type="domain" description="HTH APSES-type" evidence="1">
    <location>
        <begin position="38"/>
        <end position="147"/>
    </location>
</feature>
<feature type="DNA-binding region" description="H-T-H motif" evidence="1">
    <location>
        <begin position="73"/>
        <end position="94"/>
    </location>
</feature>
<feature type="region of interest" description="Disordered" evidence="2">
    <location>
        <begin position="1"/>
        <end position="21"/>
    </location>
</feature>
<feature type="region of interest" description="Disordered" evidence="2">
    <location>
        <begin position="139"/>
        <end position="283"/>
    </location>
</feature>
<feature type="region of interest" description="Disordered" evidence="2">
    <location>
        <begin position="364"/>
        <end position="384"/>
    </location>
</feature>
<feature type="compositionally biased region" description="Low complexity" evidence="2">
    <location>
        <begin position="139"/>
        <end position="152"/>
    </location>
</feature>
<feature type="compositionally biased region" description="Low complexity" evidence="2">
    <location>
        <begin position="163"/>
        <end position="172"/>
    </location>
</feature>
<feature type="compositionally biased region" description="Basic and acidic residues" evidence="2">
    <location>
        <begin position="180"/>
        <end position="228"/>
    </location>
</feature>
<feature type="compositionally biased region" description="Polar residues" evidence="2">
    <location>
        <begin position="229"/>
        <end position="241"/>
    </location>
</feature>
<feature type="helix" evidence="8">
    <location>
        <begin position="16"/>
        <end position="18"/>
    </location>
</feature>
<feature type="helix" evidence="8">
    <location>
        <begin position="26"/>
        <end position="31"/>
    </location>
</feature>
<feature type="strand" evidence="8">
    <location>
        <begin position="33"/>
        <end position="39"/>
    </location>
</feature>
<feature type="strand" evidence="8">
    <location>
        <begin position="42"/>
        <end position="52"/>
    </location>
</feature>
<feature type="turn" evidence="8">
    <location>
        <begin position="54"/>
        <end position="56"/>
    </location>
</feature>
<feature type="strand" evidence="8">
    <location>
        <begin position="59"/>
        <end position="65"/>
    </location>
</feature>
<feature type="turn" evidence="8">
    <location>
        <begin position="66"/>
        <end position="68"/>
    </location>
</feature>
<feature type="helix" evidence="8">
    <location>
        <begin position="73"/>
        <end position="80"/>
    </location>
</feature>
<feature type="helix" evidence="8">
    <location>
        <begin position="86"/>
        <end position="99"/>
    </location>
</feature>
<feature type="strand" evidence="7">
    <location>
        <begin position="103"/>
        <end position="105"/>
    </location>
</feature>
<feature type="strand" evidence="8">
    <location>
        <begin position="106"/>
        <end position="108"/>
    </location>
</feature>
<feature type="helix" evidence="8">
    <location>
        <begin position="115"/>
        <end position="124"/>
    </location>
</feature>
<feature type="helix" evidence="8">
    <location>
        <begin position="128"/>
        <end position="136"/>
    </location>
</feature>
<dbReference type="EMBL" id="CU329671">
    <property type="protein sequence ID" value="CAB43057.1"/>
    <property type="molecule type" value="Genomic_DNA"/>
</dbReference>
<dbReference type="EMBL" id="AB027792">
    <property type="protein sequence ID" value="BAA87096.1"/>
    <property type="molecule type" value="Genomic_DNA"/>
</dbReference>
<dbReference type="PIR" id="T39816">
    <property type="entry name" value="T39816"/>
</dbReference>
<dbReference type="RefSeq" id="NP_596166.1">
    <property type="nucleotide sequence ID" value="NM_001022086.2"/>
</dbReference>
<dbReference type="PDB" id="5YBX">
    <property type="method" value="X-ray"/>
    <property type="resolution" value="2.50 A"/>
    <property type="chains" value="A=2-140"/>
</dbReference>
<dbReference type="PDB" id="5YC2">
    <property type="method" value="X-ray"/>
    <property type="resolution" value="2.70 A"/>
    <property type="chains" value="A/C=9-140"/>
</dbReference>
<dbReference type="PDB" id="5YCA">
    <property type="method" value="X-ray"/>
    <property type="resolution" value="1.57 A"/>
    <property type="chains" value="A=9-140"/>
</dbReference>
<dbReference type="PDB" id="6A6W">
    <property type="method" value="X-ray"/>
    <property type="resolution" value="2.60 A"/>
    <property type="chains" value="A=2-140"/>
</dbReference>
<dbReference type="PDBsum" id="5YBX"/>
<dbReference type="PDBsum" id="5YC2"/>
<dbReference type="PDBsum" id="5YCA"/>
<dbReference type="PDBsum" id="6A6W"/>
<dbReference type="SMR" id="O60158"/>
<dbReference type="BioGRID" id="277218">
    <property type="interactions" value="61"/>
</dbReference>
<dbReference type="FunCoup" id="O60158">
    <property type="interactions" value="1"/>
</dbReference>
<dbReference type="STRING" id="284812.O60158"/>
<dbReference type="iPTMnet" id="O60158"/>
<dbReference type="SwissPalm" id="O60158"/>
<dbReference type="PaxDb" id="4896-SPBC19C7.10.1"/>
<dbReference type="EnsemblFungi" id="SPBC19C7.10.1">
    <property type="protein sequence ID" value="SPBC19C7.10.1:pep"/>
    <property type="gene ID" value="SPBC19C7.10"/>
</dbReference>
<dbReference type="GeneID" id="2540694"/>
<dbReference type="KEGG" id="spo:2540694"/>
<dbReference type="PomBase" id="SPBC19C7.10">
    <property type="gene designation" value="bqt4"/>
</dbReference>
<dbReference type="VEuPathDB" id="FungiDB:SPBC19C7.10"/>
<dbReference type="eggNOG" id="ENOG502S0ET">
    <property type="taxonomic scope" value="Eukaryota"/>
</dbReference>
<dbReference type="HOGENOM" id="CLU_657479_0_0_1"/>
<dbReference type="InParanoid" id="O60158"/>
<dbReference type="OMA" id="FKAAFPW"/>
<dbReference type="PRO" id="PR:O60158"/>
<dbReference type="Proteomes" id="UP000002485">
    <property type="component" value="Chromosome II"/>
</dbReference>
<dbReference type="GO" id="GO:0005737">
    <property type="term" value="C:cytoplasm"/>
    <property type="evidence" value="ECO:0007669"/>
    <property type="project" value="UniProtKB-SubCell"/>
</dbReference>
<dbReference type="GO" id="GO:0016020">
    <property type="term" value="C:membrane"/>
    <property type="evidence" value="ECO:0000314"/>
    <property type="project" value="PomBase"/>
</dbReference>
<dbReference type="GO" id="GO:0005635">
    <property type="term" value="C:nuclear envelope"/>
    <property type="evidence" value="ECO:0000314"/>
    <property type="project" value="PomBase"/>
</dbReference>
<dbReference type="GO" id="GO:0005637">
    <property type="term" value="C:nuclear inner membrane"/>
    <property type="evidence" value="ECO:0000314"/>
    <property type="project" value="PomBase"/>
</dbReference>
<dbReference type="GO" id="GO:1990862">
    <property type="term" value="C:nuclear membrane complex Bqt3-Bqt4"/>
    <property type="evidence" value="ECO:0000353"/>
    <property type="project" value="PomBase"/>
</dbReference>
<dbReference type="GO" id="GO:0005634">
    <property type="term" value="C:nucleus"/>
    <property type="evidence" value="ECO:0007005"/>
    <property type="project" value="PomBase"/>
</dbReference>
<dbReference type="GO" id="GO:0003677">
    <property type="term" value="F:DNA binding"/>
    <property type="evidence" value="ECO:0000314"/>
    <property type="project" value="PomBase"/>
</dbReference>
<dbReference type="GO" id="GO:0140473">
    <property type="term" value="F:telomere-nuclear envelope anchor activity"/>
    <property type="evidence" value="ECO:0000315"/>
    <property type="project" value="PomBase"/>
</dbReference>
<dbReference type="GO" id="GO:0051301">
    <property type="term" value="P:cell division"/>
    <property type="evidence" value="ECO:0007669"/>
    <property type="project" value="UniProtKB-KW"/>
</dbReference>
<dbReference type="GO" id="GO:0070197">
    <property type="term" value="P:meiotic attachment of telomere to nuclear envelope"/>
    <property type="evidence" value="ECO:0007669"/>
    <property type="project" value="InterPro"/>
</dbReference>
<dbReference type="GO" id="GO:0045141">
    <property type="term" value="P:meiotic telomere clustering"/>
    <property type="evidence" value="ECO:0000315"/>
    <property type="project" value="PomBase"/>
</dbReference>
<dbReference type="GO" id="GO:0044821">
    <property type="term" value="P:meiotic telomere tethering at nuclear periphery"/>
    <property type="evidence" value="ECO:0000315"/>
    <property type="project" value="PomBase"/>
</dbReference>
<dbReference type="GO" id="GO:0044820">
    <property type="term" value="P:mitotic telomere tethering at nuclear periphery"/>
    <property type="evidence" value="ECO:0000315"/>
    <property type="project" value="PomBase"/>
</dbReference>
<dbReference type="GO" id="GO:0000723">
    <property type="term" value="P:telomere maintenance"/>
    <property type="evidence" value="ECO:0000269"/>
    <property type="project" value="PomBase"/>
</dbReference>
<dbReference type="GO" id="GO:0032200">
    <property type="term" value="P:telomere organization"/>
    <property type="evidence" value="ECO:0000315"/>
    <property type="project" value="PomBase"/>
</dbReference>
<dbReference type="Gene3D" id="1.20.120.20">
    <property type="entry name" value="Apolipoprotein"/>
    <property type="match status" value="1"/>
</dbReference>
<dbReference type="Gene3D" id="3.10.260.10">
    <property type="entry name" value="Transcription regulator HTH, APSES-type DNA-binding domain"/>
    <property type="match status" value="1"/>
</dbReference>
<dbReference type="InterPro" id="IPR037548">
    <property type="entry name" value="Bqt4"/>
</dbReference>
<dbReference type="InterPro" id="IPR036887">
    <property type="entry name" value="HTH_APSES_sf"/>
</dbReference>
<dbReference type="InterPro" id="IPR018004">
    <property type="entry name" value="KilA/APSES_HTH"/>
</dbReference>
<dbReference type="InterPro" id="IPR003163">
    <property type="entry name" value="Tscrpt_reg_HTH_APSES-type"/>
</dbReference>
<dbReference type="PANTHER" id="PTHR38044">
    <property type="entry name" value="BOUQUET FORMATION PROTEIN 4"/>
    <property type="match status" value="1"/>
</dbReference>
<dbReference type="PANTHER" id="PTHR38044:SF1">
    <property type="entry name" value="BOUQUET FORMATION PROTEIN 4"/>
    <property type="match status" value="1"/>
</dbReference>
<dbReference type="SMART" id="SM01252">
    <property type="entry name" value="KilA-N"/>
    <property type="match status" value="1"/>
</dbReference>
<dbReference type="SUPFAM" id="SSF54616">
    <property type="entry name" value="DNA-binding domain of Mlu1-box binding protein MBP1"/>
    <property type="match status" value="1"/>
</dbReference>
<dbReference type="PROSITE" id="PS51299">
    <property type="entry name" value="HTH_APSES"/>
    <property type="match status" value="1"/>
</dbReference>
<reference key="1">
    <citation type="journal article" date="2002" name="Nature">
        <title>The genome sequence of Schizosaccharomyces pombe.</title>
        <authorList>
            <person name="Wood V."/>
            <person name="Gwilliam R."/>
            <person name="Rajandream M.A."/>
            <person name="Lyne M.H."/>
            <person name="Lyne R."/>
            <person name="Stewart A."/>
            <person name="Sgouros J.G."/>
            <person name="Peat N."/>
            <person name="Hayles J."/>
            <person name="Baker S.G."/>
            <person name="Basham D."/>
            <person name="Bowman S."/>
            <person name="Brooks K."/>
            <person name="Brown D."/>
            <person name="Brown S."/>
            <person name="Chillingworth T."/>
            <person name="Churcher C.M."/>
            <person name="Collins M."/>
            <person name="Connor R."/>
            <person name="Cronin A."/>
            <person name="Davis P."/>
            <person name="Feltwell T."/>
            <person name="Fraser A."/>
            <person name="Gentles S."/>
            <person name="Goble A."/>
            <person name="Hamlin N."/>
            <person name="Harris D.E."/>
            <person name="Hidalgo J."/>
            <person name="Hodgson G."/>
            <person name="Holroyd S."/>
            <person name="Hornsby T."/>
            <person name="Howarth S."/>
            <person name="Huckle E.J."/>
            <person name="Hunt S."/>
            <person name="Jagels K."/>
            <person name="James K.D."/>
            <person name="Jones L."/>
            <person name="Jones M."/>
            <person name="Leather S."/>
            <person name="McDonald S."/>
            <person name="McLean J."/>
            <person name="Mooney P."/>
            <person name="Moule S."/>
            <person name="Mungall K.L."/>
            <person name="Murphy L.D."/>
            <person name="Niblett D."/>
            <person name="Odell C."/>
            <person name="Oliver K."/>
            <person name="O'Neil S."/>
            <person name="Pearson D."/>
            <person name="Quail M.A."/>
            <person name="Rabbinowitsch E."/>
            <person name="Rutherford K.M."/>
            <person name="Rutter S."/>
            <person name="Saunders D."/>
            <person name="Seeger K."/>
            <person name="Sharp S."/>
            <person name="Skelton J."/>
            <person name="Simmonds M.N."/>
            <person name="Squares R."/>
            <person name="Squares S."/>
            <person name="Stevens K."/>
            <person name="Taylor K."/>
            <person name="Taylor R.G."/>
            <person name="Tivey A."/>
            <person name="Walsh S.V."/>
            <person name="Warren T."/>
            <person name="Whitehead S."/>
            <person name="Woodward J.R."/>
            <person name="Volckaert G."/>
            <person name="Aert R."/>
            <person name="Robben J."/>
            <person name="Grymonprez B."/>
            <person name="Weltjens I."/>
            <person name="Vanstreels E."/>
            <person name="Rieger M."/>
            <person name="Schaefer M."/>
            <person name="Mueller-Auer S."/>
            <person name="Gabel C."/>
            <person name="Fuchs M."/>
            <person name="Duesterhoeft A."/>
            <person name="Fritzc C."/>
            <person name="Holzer E."/>
            <person name="Moestl D."/>
            <person name="Hilbert H."/>
            <person name="Borzym K."/>
            <person name="Langer I."/>
            <person name="Beck A."/>
            <person name="Lehrach H."/>
            <person name="Reinhardt R."/>
            <person name="Pohl T.M."/>
            <person name="Eger P."/>
            <person name="Zimmermann W."/>
            <person name="Wedler H."/>
            <person name="Wambutt R."/>
            <person name="Purnelle B."/>
            <person name="Goffeau A."/>
            <person name="Cadieu E."/>
            <person name="Dreano S."/>
            <person name="Gloux S."/>
            <person name="Lelaure V."/>
            <person name="Mottier S."/>
            <person name="Galibert F."/>
            <person name="Aves S.J."/>
            <person name="Xiang Z."/>
            <person name="Hunt C."/>
            <person name="Moore K."/>
            <person name="Hurst S.M."/>
            <person name="Lucas M."/>
            <person name="Rochet M."/>
            <person name="Gaillardin C."/>
            <person name="Tallada V.A."/>
            <person name="Garzon A."/>
            <person name="Thode G."/>
            <person name="Daga R.R."/>
            <person name="Cruzado L."/>
            <person name="Jimenez J."/>
            <person name="Sanchez M."/>
            <person name="del Rey F."/>
            <person name="Benito J."/>
            <person name="Dominguez A."/>
            <person name="Revuelta J.L."/>
            <person name="Moreno S."/>
            <person name="Armstrong J."/>
            <person name="Forsburg S.L."/>
            <person name="Cerutti L."/>
            <person name="Lowe T."/>
            <person name="McCombie W.R."/>
            <person name="Paulsen I."/>
            <person name="Potashkin J."/>
            <person name="Shpakovski G.V."/>
            <person name="Ussery D."/>
            <person name="Barrell B.G."/>
            <person name="Nurse P."/>
        </authorList>
    </citation>
    <scope>NUCLEOTIDE SEQUENCE [LARGE SCALE GENOMIC DNA]</scope>
    <source>
        <strain>972 / ATCC 24843</strain>
    </source>
</reference>
<reference key="2">
    <citation type="journal article" date="2000" name="Genes Cells">
        <title>Large-scale screening of intracellular protein localization in living fission yeast cells by the use of a GFP-fusion genomic DNA library.</title>
        <authorList>
            <person name="Ding D.-Q."/>
            <person name="Tomita Y."/>
            <person name="Yamamoto A."/>
            <person name="Chikashige Y."/>
            <person name="Haraguchi T."/>
            <person name="Hiraoka Y."/>
        </authorList>
    </citation>
    <scope>NUCLEOTIDE SEQUENCE [LARGE SCALE GENOMIC DNA] OF 165-369</scope>
    <scope>SUBCELLULAR LOCATION</scope>
    <source>
        <strain>ATCC 38364 / 968</strain>
    </source>
</reference>
<reference key="3">
    <citation type="journal article" date="2009" name="J. Cell Biol.">
        <title>Membrane proteins Bqt3 and -4 anchor telomeres to the nuclear envelope to ensure chromosomal bouquet formation.</title>
        <authorList>
            <person name="Chikashige Y."/>
            <person name="Yamane M."/>
            <person name="Okamasa K."/>
            <person name="Tsutsumi C."/>
            <person name="Kojidani T."/>
            <person name="Sato M."/>
            <person name="Haraguchi T."/>
            <person name="Hiraoka Y."/>
        </authorList>
    </citation>
    <scope>SUBCELLULAR LOCATION</scope>
    <scope>FUNCTION</scope>
    <scope>INTERACTION WITH RAP1</scope>
</reference>
<reference key="4">
    <citation type="journal article" date="2006" name="Nat. Biotechnol.">
        <title>ORFeome cloning and global analysis of protein localization in the fission yeast Schizosaccharomyces pombe.</title>
        <authorList>
            <person name="Matsuyama A."/>
            <person name="Arai R."/>
            <person name="Yashiroda Y."/>
            <person name="Shirai A."/>
            <person name="Kamata A."/>
            <person name="Sekido S."/>
            <person name="Kobayashi Y."/>
            <person name="Hashimoto A."/>
            <person name="Hamamoto M."/>
            <person name="Hiraoka Y."/>
            <person name="Horinouchi S."/>
            <person name="Yoshida M."/>
        </authorList>
    </citation>
    <scope>SUBCELLULAR LOCATION [LARGE SCALE ANALYSIS]</scope>
</reference>
<sequence length="432" mass="47827">MTENEKSRSLPAERNPLYKDDTLDHTPLIPKCRAQVIEFPDGPATFVRLKCTNPESKVPHFLMRMAKDSSISATSMFRSAFPKATQEEEDLEMRWIRDNLNPIEDKRVAGLWVPPADALALAKDYSMTPFINALLEASSTPSTYATPSRPTAQKSETSEGEPESSTSATTTSVARRTRQRLAEHLENSKKTILQHDNKEEDKEIHSEENETKDEIKSEKKEPEIKKQEGGSSTEKVGQPSSSDDKAKGSTSKDQPSEEEEKTSDIQDRKIKTPIKPSLLGKIRSSVNKGMTDVASQVNRGMTDVASQVNKGVNGVASQVNKGMNGVANQVNKGVTGVASQVRKPVGKLEKKFENLEKSIGDTLKSSIRSSPKSKKRSREDFEENEDYNAMVPVKRSRITKLESEVYYEKRKVRALGGIAIGLGVGAILPFLF</sequence>
<comment type="function">
    <text evidence="5">Connects telomeres to the nuclear envelop (NE) during both vegetative growth and meiosis. This connection ensures clustering of telomeres to the spindle pole body (SPB) when cells enter meiotic prophase.</text>
</comment>
<comment type="subunit">
    <text evidence="5">Interacts with rap1.</text>
</comment>
<comment type="subcellular location">
    <subcellularLocation>
        <location evidence="6">Cytoplasm</location>
    </subcellularLocation>
    <subcellularLocation>
        <location evidence="3 4">Nucleus</location>
    </subcellularLocation>
    <subcellularLocation>
        <location evidence="5">Nucleus inner membrane</location>
        <topology evidence="6">Peripheral membrane protein</topology>
    </subcellularLocation>
</comment>
<proteinExistence type="evidence at protein level"/>
<organism>
    <name type="scientific">Schizosaccharomyces pombe (strain 972 / ATCC 24843)</name>
    <name type="common">Fission yeast</name>
    <dbReference type="NCBI Taxonomy" id="284812"/>
    <lineage>
        <taxon>Eukaryota</taxon>
        <taxon>Fungi</taxon>
        <taxon>Dikarya</taxon>
        <taxon>Ascomycota</taxon>
        <taxon>Taphrinomycotina</taxon>
        <taxon>Schizosaccharomycetes</taxon>
        <taxon>Schizosaccharomycetales</taxon>
        <taxon>Schizosaccharomycetaceae</taxon>
        <taxon>Schizosaccharomyces</taxon>
    </lineage>
</organism>
<keyword id="KW-0002">3D-structure</keyword>
<keyword id="KW-0131">Cell cycle</keyword>
<keyword id="KW-0132">Cell division</keyword>
<keyword id="KW-0159">Chromosome partition</keyword>
<keyword id="KW-0963">Cytoplasm</keyword>
<keyword id="KW-0238">DNA-binding</keyword>
<keyword id="KW-0469">Meiosis</keyword>
<keyword id="KW-0472">Membrane</keyword>
<keyword id="KW-0539">Nucleus</keyword>
<keyword id="KW-1185">Reference proteome</keyword>
<protein>
    <recommendedName>
        <fullName>Bouquet formation protein 4</fullName>
    </recommendedName>
</protein>
<evidence type="ECO:0000255" key="1">
    <source>
        <dbReference type="PROSITE-ProRule" id="PRU00630"/>
    </source>
</evidence>
<evidence type="ECO:0000256" key="2">
    <source>
        <dbReference type="SAM" id="MobiDB-lite"/>
    </source>
</evidence>
<evidence type="ECO:0000269" key="3">
    <source>
    </source>
</evidence>
<evidence type="ECO:0000269" key="4">
    <source>
    </source>
</evidence>
<evidence type="ECO:0000269" key="5">
    <source>
    </source>
</evidence>
<evidence type="ECO:0000305" key="6"/>
<evidence type="ECO:0007829" key="7">
    <source>
        <dbReference type="PDB" id="5YC2"/>
    </source>
</evidence>
<evidence type="ECO:0007829" key="8">
    <source>
        <dbReference type="PDB" id="5YCA"/>
    </source>
</evidence>
<gene>
    <name type="primary">bqt4</name>
    <name type="ORF">SPBC19C7.10</name>
</gene>